<protein>
    <recommendedName>
        <fullName>NXPE family member 3</fullName>
    </recommendedName>
    <alternativeName>
        <fullName>Protein FAM55C</fullName>
    </alternativeName>
</protein>
<reference key="1">
    <citation type="submission" date="2004-11" db="EMBL/GenBank/DDBJ databases">
        <authorList>
            <consortium name="The German cDNA consortium"/>
        </authorList>
    </citation>
    <scope>NUCLEOTIDE SEQUENCE [LARGE SCALE MRNA]</scope>
    <source>
        <tissue>Brain cortex</tissue>
    </source>
</reference>
<comment type="subcellular location">
    <subcellularLocation>
        <location evidence="2">Secreted</location>
    </subcellularLocation>
</comment>
<comment type="similarity">
    <text evidence="2">Belongs to the NXPE family.</text>
</comment>
<proteinExistence type="evidence at transcript level"/>
<dbReference type="EMBL" id="CR858373">
    <property type="protein sequence ID" value="CAH90602.1"/>
    <property type="molecule type" value="mRNA"/>
</dbReference>
<dbReference type="RefSeq" id="NP_001125326.1">
    <property type="nucleotide sequence ID" value="NM_001131854.1"/>
</dbReference>
<dbReference type="FunCoup" id="Q5RCA5">
    <property type="interactions" value="387"/>
</dbReference>
<dbReference type="GlyCosmos" id="Q5RCA5">
    <property type="glycosylation" value="3 sites, No reported glycans"/>
</dbReference>
<dbReference type="GeneID" id="100172225"/>
<dbReference type="KEGG" id="pon:100172225"/>
<dbReference type="CTD" id="91775"/>
<dbReference type="eggNOG" id="ENOG502QUD6">
    <property type="taxonomic scope" value="Eukaryota"/>
</dbReference>
<dbReference type="InParanoid" id="Q5RCA5"/>
<dbReference type="OrthoDB" id="5950832at2759"/>
<dbReference type="Proteomes" id="UP000001595">
    <property type="component" value="Unplaced"/>
</dbReference>
<dbReference type="GO" id="GO:0005576">
    <property type="term" value="C:extracellular region"/>
    <property type="evidence" value="ECO:0007669"/>
    <property type="project" value="UniProtKB-SubCell"/>
</dbReference>
<dbReference type="Gene3D" id="2.60.40.10">
    <property type="entry name" value="Immunoglobulins"/>
    <property type="match status" value="1"/>
</dbReference>
<dbReference type="InterPro" id="IPR013783">
    <property type="entry name" value="Ig-like_fold"/>
</dbReference>
<dbReference type="InterPro" id="IPR014756">
    <property type="entry name" value="Ig_E-set"/>
</dbReference>
<dbReference type="InterPro" id="IPR057106">
    <property type="entry name" value="NXPE4_C"/>
</dbReference>
<dbReference type="InterPro" id="IPR026845">
    <property type="entry name" value="NXPH/NXPE"/>
</dbReference>
<dbReference type="PANTHER" id="PTHR16165">
    <property type="entry name" value="NXPE FAMILY MEMBER"/>
    <property type="match status" value="1"/>
</dbReference>
<dbReference type="PANTHER" id="PTHR16165:SF9">
    <property type="entry name" value="NXPE FAMILY MEMBER 3"/>
    <property type="match status" value="1"/>
</dbReference>
<dbReference type="Pfam" id="PF06312">
    <property type="entry name" value="Neurexophilin"/>
    <property type="match status" value="1"/>
</dbReference>
<dbReference type="Pfam" id="PF24536">
    <property type="entry name" value="NXPE4_C"/>
    <property type="match status" value="1"/>
</dbReference>
<dbReference type="SUPFAM" id="SSF81296">
    <property type="entry name" value="E set domains"/>
    <property type="match status" value="1"/>
</dbReference>
<sequence>MWTNFFKLRLFCCLLAVLMVVVLVVNVTQVEYLDHETVSATFIDSSGQFVSSQVTGISRNPYCGYDQQTLSSQERMEEDSLLAALHQQVPDVGPVPFVKSTDPSSSYFVILNSAAFFKVGSQLEVLVHVQDFQRKPKKYGGDYLQARIHSPKLQAGAVGRVVDYQNGFYKVFFTLLWPGKVKVSVSLVHPSEGIRVLQRLQEDKPDRVYFKSLFRSGRISETTECNVCLPGNLPLCNFTDLYTGEPWFCFKPKKLPCSSRITHFKGGYLKGLLTAAESAFFQSGVNIKMPINSSGPDWVTVIPRRIKETNNLELSQGSGTFPSGYYYKDQWRPRKFKMRQFNDPDNITECLQRKVVHLFGDSTIRQWFEYLTTFVPDLVEFNLGSPKNVGPFLAVDQKHNILLKYRCHGPPIRFTTVFSNELHYVANELNGIVGGKNTVVAIAVWSRFSTFPLEVYIRRLRNIRRAVVRLLDRSPKTVVVIRTANAQELGPEVSLFNSDWYNFQLDTILRRMFSGVGVYLVDAWEMTLAHYLPHKLHPDEVIVKNQLDMFLSFVCPLET</sequence>
<accession>Q5RCA5</accession>
<evidence type="ECO:0000255" key="1"/>
<evidence type="ECO:0000305" key="2"/>
<feature type="signal peptide" evidence="1">
    <location>
        <begin position="1"/>
        <end position="30"/>
    </location>
</feature>
<feature type="chain" id="PRO_0000297595" description="NXPE family member 3">
    <location>
        <begin position="31"/>
        <end position="559"/>
    </location>
</feature>
<feature type="glycosylation site" description="N-linked (GlcNAc...) asparagine" evidence="1">
    <location>
        <position position="26"/>
    </location>
</feature>
<feature type="glycosylation site" description="N-linked (GlcNAc...) asparagine" evidence="1">
    <location>
        <position position="237"/>
    </location>
</feature>
<feature type="glycosylation site" description="N-linked (GlcNAc...) asparagine" evidence="1">
    <location>
        <position position="346"/>
    </location>
</feature>
<gene>
    <name type="primary">NXPE3</name>
    <name type="synonym">FAM55C</name>
</gene>
<name>NXPE3_PONAB</name>
<organism>
    <name type="scientific">Pongo abelii</name>
    <name type="common">Sumatran orangutan</name>
    <name type="synonym">Pongo pygmaeus abelii</name>
    <dbReference type="NCBI Taxonomy" id="9601"/>
    <lineage>
        <taxon>Eukaryota</taxon>
        <taxon>Metazoa</taxon>
        <taxon>Chordata</taxon>
        <taxon>Craniata</taxon>
        <taxon>Vertebrata</taxon>
        <taxon>Euteleostomi</taxon>
        <taxon>Mammalia</taxon>
        <taxon>Eutheria</taxon>
        <taxon>Euarchontoglires</taxon>
        <taxon>Primates</taxon>
        <taxon>Haplorrhini</taxon>
        <taxon>Catarrhini</taxon>
        <taxon>Hominidae</taxon>
        <taxon>Pongo</taxon>
    </lineage>
</organism>
<keyword id="KW-0325">Glycoprotein</keyword>
<keyword id="KW-1185">Reference proteome</keyword>
<keyword id="KW-0964">Secreted</keyword>
<keyword id="KW-0732">Signal</keyword>